<evidence type="ECO:0000255" key="1">
    <source>
        <dbReference type="HAMAP-Rule" id="MF_00634"/>
    </source>
</evidence>
<dbReference type="EMBL" id="CP001321">
    <property type="protein sequence ID" value="ACL33062.1"/>
    <property type="molecule type" value="Genomic_DNA"/>
</dbReference>
<dbReference type="SMR" id="B8F6W0"/>
<dbReference type="STRING" id="557723.HAPS_1504"/>
<dbReference type="KEGG" id="hap:HAPS_1504"/>
<dbReference type="HOGENOM" id="CLU_130694_5_0_6"/>
<dbReference type="Proteomes" id="UP000006743">
    <property type="component" value="Chromosome"/>
</dbReference>
<dbReference type="GO" id="GO:0005737">
    <property type="term" value="C:cytoplasm"/>
    <property type="evidence" value="ECO:0007669"/>
    <property type="project" value="TreeGrafter"/>
</dbReference>
<dbReference type="Gene3D" id="3.30.1200.10">
    <property type="entry name" value="YggU-like"/>
    <property type="match status" value="1"/>
</dbReference>
<dbReference type="HAMAP" id="MF_00634">
    <property type="entry name" value="UPF0235"/>
    <property type="match status" value="1"/>
</dbReference>
<dbReference type="InterPro" id="IPR003746">
    <property type="entry name" value="DUF167"/>
</dbReference>
<dbReference type="InterPro" id="IPR036591">
    <property type="entry name" value="YggU-like_sf"/>
</dbReference>
<dbReference type="NCBIfam" id="TIGR00251">
    <property type="entry name" value="DUF167 family protein"/>
    <property type="match status" value="1"/>
</dbReference>
<dbReference type="NCBIfam" id="NF003466">
    <property type="entry name" value="PRK05090.1"/>
    <property type="match status" value="1"/>
</dbReference>
<dbReference type="PANTHER" id="PTHR13420">
    <property type="entry name" value="UPF0235 PROTEIN C15ORF40"/>
    <property type="match status" value="1"/>
</dbReference>
<dbReference type="PANTHER" id="PTHR13420:SF7">
    <property type="entry name" value="UPF0235 PROTEIN C15ORF40"/>
    <property type="match status" value="1"/>
</dbReference>
<dbReference type="Pfam" id="PF02594">
    <property type="entry name" value="DUF167"/>
    <property type="match status" value="1"/>
</dbReference>
<dbReference type="SMART" id="SM01152">
    <property type="entry name" value="DUF167"/>
    <property type="match status" value="1"/>
</dbReference>
<dbReference type="SUPFAM" id="SSF69786">
    <property type="entry name" value="YggU-like"/>
    <property type="match status" value="1"/>
</dbReference>
<keyword id="KW-1185">Reference proteome</keyword>
<comment type="similarity">
    <text evidence="1">Belongs to the UPF0235 family.</text>
</comment>
<organism>
    <name type="scientific">Glaesserella parasuis serovar 5 (strain SH0165)</name>
    <name type="common">Haemophilus parasuis</name>
    <dbReference type="NCBI Taxonomy" id="557723"/>
    <lineage>
        <taxon>Bacteria</taxon>
        <taxon>Pseudomonadati</taxon>
        <taxon>Pseudomonadota</taxon>
        <taxon>Gammaproteobacteria</taxon>
        <taxon>Pasteurellales</taxon>
        <taxon>Pasteurellaceae</taxon>
        <taxon>Glaesserella</taxon>
    </lineage>
</organism>
<name>Y1504_GLAP5</name>
<reference key="1">
    <citation type="journal article" date="2009" name="J. Bacteriol.">
        <title>Complete genome sequence of Haemophilus parasuis SH0165.</title>
        <authorList>
            <person name="Yue M."/>
            <person name="Yang F."/>
            <person name="Yang J."/>
            <person name="Bei W."/>
            <person name="Cai X."/>
            <person name="Chen L."/>
            <person name="Dong J."/>
            <person name="Zhou R."/>
            <person name="Jin M."/>
            <person name="Jin Q."/>
            <person name="Chen H."/>
        </authorList>
    </citation>
    <scope>NUCLEOTIDE SEQUENCE [LARGE SCALE GENOMIC DNA]</scope>
    <source>
        <strain>SH0165</strain>
    </source>
</reference>
<sequence length="97" mass="10962">MQAVEFCENPQGIRLRIFLQPKASRDQIVGLHDNELKIAITAPPIDGQANAHLLKYLSKLFKVPKSSIVLEKGELQRHKQIFVPEPKLIPKEIEVLG</sequence>
<accession>B8F6W0</accession>
<protein>
    <recommendedName>
        <fullName evidence="1">UPF0235 protein HAPS_1504</fullName>
    </recommendedName>
</protein>
<proteinExistence type="inferred from homology"/>
<feature type="chain" id="PRO_1000147343" description="UPF0235 protein HAPS_1504">
    <location>
        <begin position="1"/>
        <end position="97"/>
    </location>
</feature>
<gene>
    <name type="ordered locus">HAPS_1504</name>
</gene>